<feature type="chain" id="PRO_0000146695" description="Nucleoside-triphosphatase THEP1">
    <location>
        <begin position="1"/>
        <end position="175"/>
    </location>
</feature>
<feature type="binding site" evidence="1">
    <location>
        <begin position="8"/>
        <end position="15"/>
    </location>
    <ligand>
        <name>ATP</name>
        <dbReference type="ChEBI" id="CHEBI:30616"/>
    </ligand>
</feature>
<feature type="binding site" evidence="1">
    <location>
        <begin position="99"/>
        <end position="106"/>
    </location>
    <ligand>
        <name>ATP</name>
        <dbReference type="ChEBI" id="CHEBI:30616"/>
    </ligand>
</feature>
<comment type="function">
    <text evidence="1">Has nucleotide phosphatase activity towards ATP, GTP, CTP, TTP and UTP. May hydrolyze nucleoside diphosphates with lower efficiency.</text>
</comment>
<comment type="catalytic activity">
    <reaction evidence="1">
        <text>a ribonucleoside 5'-triphosphate + H2O = a ribonucleoside 5'-diphosphate + phosphate + H(+)</text>
        <dbReference type="Rhea" id="RHEA:23680"/>
        <dbReference type="ChEBI" id="CHEBI:15377"/>
        <dbReference type="ChEBI" id="CHEBI:15378"/>
        <dbReference type="ChEBI" id="CHEBI:43474"/>
        <dbReference type="ChEBI" id="CHEBI:57930"/>
        <dbReference type="ChEBI" id="CHEBI:61557"/>
        <dbReference type="EC" id="3.6.1.15"/>
    </reaction>
</comment>
<comment type="similarity">
    <text evidence="1">Belongs to the THEP1 NTPase family.</text>
</comment>
<comment type="sequence caution" evidence="2">
    <conflict type="erroneous initiation">
        <sequence resource="EMBL-CDS" id="AAM06769"/>
    </conflict>
</comment>
<name>NTPTH_METAC</name>
<sequence length="175" mass="19054">MLRIAVTGSPGVGKSTVVAKTAEKLAEKPGFKIGGIRTAEIRKEGHREGFSIRDLATGKTGILSHVKGSGPRLGKYHVNLDDLERIGANAVRNALACDLVVIDEIGPMELISQSFVSAVEEVLESDKPVLAVLHHSSRHPLAQRFRKGFEVLTVDKGNRDELPEKITNRFLRKLG</sequence>
<reference key="1">
    <citation type="journal article" date="2002" name="Genome Res.">
        <title>The genome of Methanosarcina acetivorans reveals extensive metabolic and physiological diversity.</title>
        <authorList>
            <person name="Galagan J.E."/>
            <person name="Nusbaum C."/>
            <person name="Roy A."/>
            <person name="Endrizzi M.G."/>
            <person name="Macdonald P."/>
            <person name="FitzHugh W."/>
            <person name="Calvo S."/>
            <person name="Engels R."/>
            <person name="Smirnov S."/>
            <person name="Atnoor D."/>
            <person name="Brown A."/>
            <person name="Allen N."/>
            <person name="Naylor J."/>
            <person name="Stange-Thomann N."/>
            <person name="DeArellano K."/>
            <person name="Johnson R."/>
            <person name="Linton L."/>
            <person name="McEwan P."/>
            <person name="McKernan K."/>
            <person name="Talamas J."/>
            <person name="Tirrell A."/>
            <person name="Ye W."/>
            <person name="Zimmer A."/>
            <person name="Barber R.D."/>
            <person name="Cann I."/>
            <person name="Graham D.E."/>
            <person name="Grahame D.A."/>
            <person name="Guss A.M."/>
            <person name="Hedderich R."/>
            <person name="Ingram-Smith C."/>
            <person name="Kuettner H.C."/>
            <person name="Krzycki J.A."/>
            <person name="Leigh J.A."/>
            <person name="Li W."/>
            <person name="Liu J."/>
            <person name="Mukhopadhyay B."/>
            <person name="Reeve J.N."/>
            <person name="Smith K."/>
            <person name="Springer T.A."/>
            <person name="Umayam L.A."/>
            <person name="White O."/>
            <person name="White R.H."/>
            <person name="de Macario E.C."/>
            <person name="Ferry J.G."/>
            <person name="Jarrell K.F."/>
            <person name="Jing H."/>
            <person name="Macario A.J.L."/>
            <person name="Paulsen I.T."/>
            <person name="Pritchett M."/>
            <person name="Sowers K.R."/>
            <person name="Swanson R.V."/>
            <person name="Zinder S.H."/>
            <person name="Lander E."/>
            <person name="Metcalf W.W."/>
            <person name="Birren B."/>
        </authorList>
    </citation>
    <scope>NUCLEOTIDE SEQUENCE [LARGE SCALE GENOMIC DNA]</scope>
    <source>
        <strain>ATCC 35395 / DSM 2834 / JCM 12185 / C2A</strain>
    </source>
</reference>
<accession>Q8TKK3</accession>
<dbReference type="EC" id="3.6.1.15" evidence="1"/>
<dbReference type="EMBL" id="AE010299">
    <property type="protein sequence ID" value="AAM06769.1"/>
    <property type="status" value="ALT_INIT"/>
    <property type="molecule type" value="Genomic_DNA"/>
</dbReference>
<dbReference type="SMR" id="Q8TKK3"/>
<dbReference type="FunCoup" id="Q8TKK3">
    <property type="interactions" value="98"/>
</dbReference>
<dbReference type="STRING" id="188937.MA_3402"/>
<dbReference type="EnsemblBacteria" id="AAM06769">
    <property type="protein sequence ID" value="AAM06769"/>
    <property type="gene ID" value="MA_3402"/>
</dbReference>
<dbReference type="KEGG" id="mac:MA_3402"/>
<dbReference type="HOGENOM" id="CLU_103145_1_1_2"/>
<dbReference type="InParanoid" id="Q8TKK3"/>
<dbReference type="OrthoDB" id="52698at2157"/>
<dbReference type="PhylomeDB" id="Q8TKK3"/>
<dbReference type="Proteomes" id="UP000002487">
    <property type="component" value="Chromosome"/>
</dbReference>
<dbReference type="GO" id="GO:0005524">
    <property type="term" value="F:ATP binding"/>
    <property type="evidence" value="ECO:0007669"/>
    <property type="project" value="UniProtKB-UniRule"/>
</dbReference>
<dbReference type="GO" id="GO:0017111">
    <property type="term" value="F:ribonucleoside triphosphate phosphatase activity"/>
    <property type="evidence" value="ECO:0007669"/>
    <property type="project" value="UniProtKB-UniRule"/>
</dbReference>
<dbReference type="CDD" id="cd19482">
    <property type="entry name" value="RecA-like_Thep1"/>
    <property type="match status" value="1"/>
</dbReference>
<dbReference type="Gene3D" id="3.40.50.300">
    <property type="entry name" value="P-loop containing nucleotide triphosphate hydrolases"/>
    <property type="match status" value="1"/>
</dbReference>
<dbReference type="HAMAP" id="MF_00796">
    <property type="entry name" value="NTPase_1"/>
    <property type="match status" value="1"/>
</dbReference>
<dbReference type="InterPro" id="IPR004948">
    <property type="entry name" value="Nuc-triphosphatase_THEP1"/>
</dbReference>
<dbReference type="InterPro" id="IPR027417">
    <property type="entry name" value="P-loop_NTPase"/>
</dbReference>
<dbReference type="NCBIfam" id="NF010248">
    <property type="entry name" value="PRK13695.1"/>
    <property type="match status" value="1"/>
</dbReference>
<dbReference type="PANTHER" id="PTHR43146">
    <property type="entry name" value="CANCER-RELATED NUCLEOSIDE-TRIPHOSPHATASE"/>
    <property type="match status" value="1"/>
</dbReference>
<dbReference type="PANTHER" id="PTHR43146:SF1">
    <property type="entry name" value="CANCER-RELATED NUCLEOSIDE-TRIPHOSPHATASE"/>
    <property type="match status" value="1"/>
</dbReference>
<dbReference type="Pfam" id="PF03266">
    <property type="entry name" value="NTPase_1"/>
    <property type="match status" value="1"/>
</dbReference>
<dbReference type="SUPFAM" id="SSF52540">
    <property type="entry name" value="P-loop containing nucleoside triphosphate hydrolases"/>
    <property type="match status" value="1"/>
</dbReference>
<proteinExistence type="inferred from homology"/>
<evidence type="ECO:0000255" key="1">
    <source>
        <dbReference type="HAMAP-Rule" id="MF_00796"/>
    </source>
</evidence>
<evidence type="ECO:0000305" key="2"/>
<keyword id="KW-0067">ATP-binding</keyword>
<keyword id="KW-0378">Hydrolase</keyword>
<keyword id="KW-0547">Nucleotide-binding</keyword>
<keyword id="KW-1185">Reference proteome</keyword>
<protein>
    <recommendedName>
        <fullName evidence="1">Nucleoside-triphosphatase THEP1</fullName>
        <shortName evidence="1">NTPase THEP1</shortName>
        <ecNumber evidence="1">3.6.1.15</ecNumber>
    </recommendedName>
    <alternativeName>
        <fullName evidence="1">Nucleoside triphosphate phosphohydrolase</fullName>
    </alternativeName>
</protein>
<gene>
    <name type="ordered locus">MA_3402</name>
</gene>
<organism>
    <name type="scientific">Methanosarcina acetivorans (strain ATCC 35395 / DSM 2834 / JCM 12185 / C2A)</name>
    <dbReference type="NCBI Taxonomy" id="188937"/>
    <lineage>
        <taxon>Archaea</taxon>
        <taxon>Methanobacteriati</taxon>
        <taxon>Methanobacteriota</taxon>
        <taxon>Stenosarchaea group</taxon>
        <taxon>Methanomicrobia</taxon>
        <taxon>Methanosarcinales</taxon>
        <taxon>Methanosarcinaceae</taxon>
        <taxon>Methanosarcina</taxon>
    </lineage>
</organism>